<sequence length="98" mass="10095">MQFSLALVTLLATAVSALPTEEKRQAYIPCSGLYGTSQCCATDVLGVADLDCGNPPSTPANATDFSAVCSAIGQRARCCVLPILDQGILCNTPTGVQD</sequence>
<comment type="function">
    <text evidence="3 6">Aerial growth, conidiation, and dispersal of filamentous fungi in the environment rely upon a capability of their secreting small amphipathic proteins called hydrophobins (HPBs) with low sequence identity. Class I can self-assemble into an outermost layer of rodlet bundles on aerial cell surfaces, conferring cellular hydrophobicity that supports fungal growth, development and dispersal; whereas Class II form highly ordered films at water-air interfaces through intermolecular interactions but contribute nothing to the rodlet structure (Probable). Does not seem to be important for the ability to cause seedling disease (PubMed:15288021).</text>
</comment>
<comment type="subcellular location">
    <subcellularLocation>
        <location evidence="6">Secreted</location>
    </subcellularLocation>
    <subcellularLocation>
        <location evidence="6">Secreted</location>
        <location evidence="6">Cell wall</location>
    </subcellularLocation>
</comment>
<comment type="disruption phenotype">
    <text evidence="3">Does not affect pathogenicity in a corn seedling infection assay nor the production of microconidia.</text>
</comment>
<comment type="similarity">
    <text evidence="5">Belongs to the cerato-ulmin hydrophobin family.</text>
</comment>
<feature type="signal peptide" evidence="2">
    <location>
        <begin position="1"/>
        <end position="17"/>
    </location>
</feature>
<feature type="chain" id="PRO_5041159092" description="Class II hydrophobin 5">
    <location>
        <begin position="18"/>
        <end position="98"/>
    </location>
</feature>
<feature type="disulfide bond" evidence="1">
    <location>
        <begin position="30"/>
        <end position="78"/>
    </location>
</feature>
<feature type="disulfide bond" evidence="1">
    <location>
        <begin position="39"/>
        <end position="69"/>
    </location>
</feature>
<feature type="disulfide bond" evidence="1">
    <location>
        <begin position="40"/>
        <end position="52"/>
    </location>
</feature>
<feature type="disulfide bond" evidence="1">
    <location>
        <begin position="79"/>
        <end position="90"/>
    </location>
</feature>
<keyword id="KW-0134">Cell wall</keyword>
<keyword id="KW-1015">Disulfide bond</keyword>
<keyword id="KW-0964">Secreted</keyword>
<keyword id="KW-0732">Signal</keyword>
<proteinExistence type="inferred from homology"/>
<protein>
    <recommendedName>
        <fullName evidence="4">Class II hydrophobin 5</fullName>
    </recommendedName>
</protein>
<accession>Q6YD93</accession>
<gene>
    <name evidence="4" type="primary">HYD5</name>
</gene>
<dbReference type="EMBL" id="AY158024">
    <property type="protein sequence ID" value="AAN76355.1"/>
    <property type="molecule type" value="Genomic_DNA"/>
</dbReference>
<dbReference type="SMR" id="Q6YD93"/>
<dbReference type="OMA" id="LCETPTG"/>
<dbReference type="OrthoDB" id="4500971at2759"/>
<dbReference type="GO" id="GO:0005576">
    <property type="term" value="C:extracellular region"/>
    <property type="evidence" value="ECO:0007669"/>
    <property type="project" value="UniProtKB-KW"/>
</dbReference>
<dbReference type="CDD" id="cd23508">
    <property type="entry name" value="hydrophobin_II"/>
    <property type="match status" value="1"/>
</dbReference>
<dbReference type="Gene3D" id="3.20.120.10">
    <property type="entry name" value="Hydrophobin"/>
    <property type="match status" value="1"/>
</dbReference>
<dbReference type="InterPro" id="IPR010636">
    <property type="entry name" value="Cerato-ulmin_hydrophobin"/>
</dbReference>
<dbReference type="InterPro" id="IPR036686">
    <property type="entry name" value="Hydrophobin_sf"/>
</dbReference>
<dbReference type="PANTHER" id="PTHR42341">
    <property type="entry name" value="HYDROPHOBIN"/>
    <property type="match status" value="1"/>
</dbReference>
<dbReference type="PANTHER" id="PTHR42341:SF1">
    <property type="entry name" value="HYDROPHOBIN"/>
    <property type="match status" value="1"/>
</dbReference>
<dbReference type="Pfam" id="PF06766">
    <property type="entry name" value="Hydrophobin_2"/>
    <property type="match status" value="1"/>
</dbReference>
<dbReference type="SUPFAM" id="SSF101751">
    <property type="entry name" value="Hydrophobin II, HfbII"/>
    <property type="match status" value="1"/>
</dbReference>
<evidence type="ECO:0000250" key="1">
    <source>
        <dbReference type="UniProtKB" id="P52754"/>
    </source>
</evidence>
<evidence type="ECO:0000255" key="2"/>
<evidence type="ECO:0000269" key="3">
    <source>
    </source>
</evidence>
<evidence type="ECO:0000303" key="4">
    <source>
    </source>
</evidence>
<evidence type="ECO:0000305" key="5"/>
<evidence type="ECO:0000305" key="6">
    <source>
    </source>
</evidence>
<organism>
    <name type="scientific">Gibberella moniliformis</name>
    <name type="common">Maize ear and stalk rot fungus</name>
    <name type="synonym">Fusarium verticillioides</name>
    <dbReference type="NCBI Taxonomy" id="117187"/>
    <lineage>
        <taxon>Eukaryota</taxon>
        <taxon>Fungi</taxon>
        <taxon>Dikarya</taxon>
        <taxon>Ascomycota</taxon>
        <taxon>Pezizomycotina</taxon>
        <taxon>Sordariomycetes</taxon>
        <taxon>Hypocreomycetidae</taxon>
        <taxon>Hypocreales</taxon>
        <taxon>Nectriaceae</taxon>
        <taxon>Fusarium</taxon>
        <taxon>Fusarium fujikuroi species complex</taxon>
    </lineage>
</organism>
<name>HYD5_GIBMO</name>
<reference key="1">
    <citation type="journal article" date="2004" name="Fungal Genet. Biol.">
        <title>Five hydrophobin genes in Fusarium verticillioides include two required for microconidial chain formation.</title>
        <authorList>
            <person name="Fuchs U."/>
            <person name="Czymmek K.J."/>
            <person name="Sweigard J.A."/>
        </authorList>
    </citation>
    <scope>NUCLEOTIDE SEQUENCE [GENOMIC DNA]</scope>
    <scope>FUNCTION</scope>
    <scope>DISRUPTION PHENOTYPE</scope>
    <source>
        <strain>M-3125</strain>
    </source>
</reference>